<sequence length="533" mass="59410">MSLQPLTAVNCGSLLQPGCSLLQLDGDIFLFGQKGWPRRSCPTGVFGVRLKHGELKLRPISSSNDSCYLPPLRCPALTRLEPHDGHPEGYLIHGGRTPNNEISSSLYLLTLDSRGCNRKVTLRCQERELVGEQPGPRYGHTLSMVQSLGKRACVVFGGRSYMPAGERTTENWNSVVDCPPQVFIIDLEFGCCSAHTLPELTDGQSFHLALARDDYVYFLGGQSLSLDFRPPRVYSLRDGVPEGKPAVSCSTWTPSMSISSAIATRVGPSHEFIILGGYQLETQKRMECSSVVLDDSGINIEPREAPEWTGEIKHNHTWFGGSMGGGSALIGIPSEGRQATPEAHYFYQVCFQKEGEGKGEDGNQVCSQESTDFEDSAPLEDSEELYFGREPHELEDSSEGEGDTYNEEDEEDESQTGYWVKCCLGCQVDPNTWEPYYSTELLRPAMIYCSKGEGGHWVHAQCMELTEGLLVRLSQGNGKYFCLDHGGLPRQEMTPPRQVLSLKRSPMKPQHRKGPMMRRMTPAKKRFFRRLFE</sequence>
<evidence type="ECO:0000250" key="1"/>
<evidence type="ECO:0000256" key="2">
    <source>
        <dbReference type="SAM" id="MobiDB-lite"/>
    </source>
</evidence>
<evidence type="ECO:0000305" key="3"/>
<keyword id="KW-0156">Chromatin regulator</keyword>
<keyword id="KW-0233">DNA recombination</keyword>
<keyword id="KW-0479">Metal-binding</keyword>
<keyword id="KW-0539">Nucleus</keyword>
<keyword id="KW-0862">Zinc</keyword>
<keyword id="KW-0863">Zinc-finger</keyword>
<organism>
    <name type="scientific">Oncorhynchus mykiss</name>
    <name type="common">Rainbow trout</name>
    <name type="synonym">Salmo gairdneri</name>
    <dbReference type="NCBI Taxonomy" id="8022"/>
    <lineage>
        <taxon>Eukaryota</taxon>
        <taxon>Metazoa</taxon>
        <taxon>Chordata</taxon>
        <taxon>Craniata</taxon>
        <taxon>Vertebrata</taxon>
        <taxon>Euteleostomi</taxon>
        <taxon>Actinopterygii</taxon>
        <taxon>Neopterygii</taxon>
        <taxon>Teleostei</taxon>
        <taxon>Protacanthopterygii</taxon>
        <taxon>Salmoniformes</taxon>
        <taxon>Salmonidae</taxon>
        <taxon>Salmoninae</taxon>
        <taxon>Oncorhynchus</taxon>
    </lineage>
</organism>
<proteinExistence type="evidence at transcript level"/>
<feature type="chain" id="PRO_0000167142" description="V(D)J recombination-activating protein 2">
    <location>
        <begin position="1"/>
        <end position="533"/>
    </location>
</feature>
<feature type="zinc finger region" description="PHD-type; atypical">
    <location>
        <begin position="419"/>
        <end position="488"/>
    </location>
</feature>
<feature type="region of interest" description="Disordered" evidence="2">
    <location>
        <begin position="358"/>
        <end position="413"/>
    </location>
</feature>
<feature type="region of interest" description="Disordered" evidence="2">
    <location>
        <begin position="496"/>
        <end position="517"/>
    </location>
</feature>
<feature type="compositionally biased region" description="Acidic residues" evidence="2">
    <location>
        <begin position="371"/>
        <end position="384"/>
    </location>
</feature>
<feature type="compositionally biased region" description="Basic and acidic residues" evidence="2">
    <location>
        <begin position="386"/>
        <end position="395"/>
    </location>
</feature>
<feature type="compositionally biased region" description="Acidic residues" evidence="2">
    <location>
        <begin position="396"/>
        <end position="413"/>
    </location>
</feature>
<feature type="compositionally biased region" description="Basic residues" evidence="2">
    <location>
        <begin position="505"/>
        <end position="517"/>
    </location>
</feature>
<feature type="binding site" evidence="1">
    <location>
        <position position="422"/>
    </location>
    <ligand>
        <name>Zn(2+)</name>
        <dbReference type="ChEBI" id="CHEBI:29105"/>
        <label>1</label>
    </ligand>
</feature>
<feature type="binding site" evidence="1">
    <location>
        <position position="426"/>
    </location>
    <ligand>
        <name>Zn(2+)</name>
        <dbReference type="ChEBI" id="CHEBI:29105"/>
        <label>1</label>
    </ligand>
</feature>
<feature type="binding site" evidence="1">
    <location>
        <position position="449"/>
    </location>
    <ligand>
        <name>Zn(2+)</name>
        <dbReference type="ChEBI" id="CHEBI:29105"/>
        <label>2</label>
    </ligand>
</feature>
<feature type="binding site" evidence="1">
    <location>
        <position position="456"/>
    </location>
    <ligand>
        <name>Zn(2+)</name>
        <dbReference type="ChEBI" id="CHEBI:29105"/>
        <label>2</label>
    </ligand>
</feature>
<feature type="binding site" evidence="1">
    <location>
        <position position="459"/>
    </location>
    <ligand>
        <name>Zn(2+)</name>
        <dbReference type="ChEBI" id="CHEBI:29105"/>
        <label>1</label>
    </ligand>
</feature>
<feature type="binding site" evidence="1">
    <location>
        <position position="462"/>
    </location>
    <ligand>
        <name>Zn(2+)</name>
        <dbReference type="ChEBI" id="CHEBI:29105"/>
        <label>1</label>
    </ligand>
</feature>
<feature type="binding site" evidence="1">
    <location>
        <position position="482"/>
    </location>
    <ligand>
        <name>Zn(2+)</name>
        <dbReference type="ChEBI" id="CHEBI:29105"/>
        <label>2</label>
    </ligand>
</feature>
<feature type="binding site" evidence="1">
    <location>
        <position position="485"/>
    </location>
    <ligand>
        <name>Zn(2+)</name>
        <dbReference type="ChEBI" id="CHEBI:29105"/>
        <label>2</label>
    </ligand>
</feature>
<dbReference type="EMBL" id="U31670">
    <property type="protein sequence ID" value="AAB18138.1"/>
    <property type="molecule type" value="Genomic_DNA"/>
</dbReference>
<dbReference type="EMBL" id="U25146">
    <property type="protein sequence ID" value="AAA65927.1"/>
    <property type="molecule type" value="Genomic_DNA"/>
</dbReference>
<dbReference type="SMR" id="Q91193"/>
<dbReference type="Proteomes" id="UP000694395">
    <property type="component" value="Unplaced"/>
</dbReference>
<dbReference type="GO" id="GO:0097519">
    <property type="term" value="C:DNA recombinase complex"/>
    <property type="evidence" value="ECO:0007669"/>
    <property type="project" value="TreeGrafter"/>
</dbReference>
<dbReference type="GO" id="GO:0005634">
    <property type="term" value="C:nucleus"/>
    <property type="evidence" value="ECO:0007669"/>
    <property type="project" value="UniProtKB-SubCell"/>
</dbReference>
<dbReference type="GO" id="GO:0003682">
    <property type="term" value="F:chromatin binding"/>
    <property type="evidence" value="ECO:0000250"/>
    <property type="project" value="UniProtKB"/>
</dbReference>
<dbReference type="GO" id="GO:0140002">
    <property type="term" value="F:histone H3K4me3 reader activity"/>
    <property type="evidence" value="ECO:0000250"/>
    <property type="project" value="UniProtKB"/>
</dbReference>
<dbReference type="GO" id="GO:0035091">
    <property type="term" value="F:phosphatidylinositol binding"/>
    <property type="evidence" value="ECO:0000250"/>
    <property type="project" value="UniProtKB"/>
</dbReference>
<dbReference type="GO" id="GO:0005547">
    <property type="term" value="F:phosphatidylinositol-3,4,5-trisphosphate binding"/>
    <property type="evidence" value="ECO:0000250"/>
    <property type="project" value="UniProtKB"/>
</dbReference>
<dbReference type="GO" id="GO:0043325">
    <property type="term" value="F:phosphatidylinositol-3,4-bisphosphate binding"/>
    <property type="evidence" value="ECO:0000250"/>
    <property type="project" value="UniProtKB"/>
</dbReference>
<dbReference type="GO" id="GO:0080025">
    <property type="term" value="F:phosphatidylinositol-3,5-bisphosphate binding"/>
    <property type="evidence" value="ECO:0000250"/>
    <property type="project" value="UniProtKB"/>
</dbReference>
<dbReference type="GO" id="GO:0005546">
    <property type="term" value="F:phosphatidylinositol-4,5-bisphosphate binding"/>
    <property type="evidence" value="ECO:0000250"/>
    <property type="project" value="UniProtKB"/>
</dbReference>
<dbReference type="GO" id="GO:0043565">
    <property type="term" value="F:sequence-specific DNA binding"/>
    <property type="evidence" value="ECO:0007669"/>
    <property type="project" value="TreeGrafter"/>
</dbReference>
<dbReference type="GO" id="GO:0008270">
    <property type="term" value="F:zinc ion binding"/>
    <property type="evidence" value="ECO:0000250"/>
    <property type="project" value="UniProtKB"/>
</dbReference>
<dbReference type="GO" id="GO:0030183">
    <property type="term" value="P:B cell differentiation"/>
    <property type="evidence" value="ECO:0000250"/>
    <property type="project" value="UniProtKB"/>
</dbReference>
<dbReference type="GO" id="GO:0033077">
    <property type="term" value="P:T cell differentiation in thymus"/>
    <property type="evidence" value="ECO:0000250"/>
    <property type="project" value="UniProtKB"/>
</dbReference>
<dbReference type="GO" id="GO:0033151">
    <property type="term" value="P:V(D)J recombination"/>
    <property type="evidence" value="ECO:0000250"/>
    <property type="project" value="UniProtKB"/>
</dbReference>
<dbReference type="FunFam" id="2.120.10.80:FF:000047">
    <property type="entry name" value="V(D)J recombination-activating protein 2"/>
    <property type="match status" value="1"/>
</dbReference>
<dbReference type="Gene3D" id="2.120.10.80">
    <property type="entry name" value="Kelch-type beta propeller"/>
    <property type="match status" value="1"/>
</dbReference>
<dbReference type="Gene3D" id="3.30.160.290">
    <property type="entry name" value="Rag2 PHD finger"/>
    <property type="match status" value="1"/>
</dbReference>
<dbReference type="InterPro" id="IPR011043">
    <property type="entry name" value="Gal_Oxase/kelch_b-propeller"/>
</dbReference>
<dbReference type="InterPro" id="IPR015915">
    <property type="entry name" value="Kelch-typ_b-propeller"/>
</dbReference>
<dbReference type="InterPro" id="IPR004321">
    <property type="entry name" value="RAG2"/>
</dbReference>
<dbReference type="InterPro" id="IPR025162">
    <property type="entry name" value="RAG2_PHD"/>
</dbReference>
<dbReference type="InterPro" id="IPR011011">
    <property type="entry name" value="Znf_FYVE_PHD"/>
</dbReference>
<dbReference type="PANTHER" id="PTHR10960">
    <property type="entry name" value="V D J RECOMBINATION-ACTIVATING PROTEIN 2"/>
    <property type="match status" value="1"/>
</dbReference>
<dbReference type="PANTHER" id="PTHR10960:SF0">
    <property type="entry name" value="V(D)J RECOMBINATION-ACTIVATING PROTEIN 2"/>
    <property type="match status" value="1"/>
</dbReference>
<dbReference type="Pfam" id="PF03089">
    <property type="entry name" value="RAG2"/>
    <property type="match status" value="1"/>
</dbReference>
<dbReference type="Pfam" id="PF13341">
    <property type="entry name" value="RAG2_PHD"/>
    <property type="match status" value="1"/>
</dbReference>
<dbReference type="SUPFAM" id="SSF57903">
    <property type="entry name" value="FYVE/PHD zinc finger"/>
    <property type="match status" value="1"/>
</dbReference>
<dbReference type="SUPFAM" id="SSF50965">
    <property type="entry name" value="Galactose oxidase, central domain"/>
    <property type="match status" value="1"/>
</dbReference>
<reference key="1">
    <citation type="journal article" date="1996" name="Immunogenetics">
        <title>The recombination activating gene 2 (RAG2) of the rainbow trout Oncorhynchus mykiss.</title>
        <authorList>
            <person name="Hansen J.D."/>
            <person name="Kaattari S.L."/>
        </authorList>
    </citation>
    <scope>NUCLEOTIDE SEQUENCE [GENOMIC DNA]</scope>
    <source>
        <strain>Shasta</strain>
    </source>
</reference>
<accession>Q91193</accession>
<gene>
    <name type="primary">rag2</name>
</gene>
<protein>
    <recommendedName>
        <fullName>V(D)J recombination-activating protein 2</fullName>
        <shortName>RAG-2</shortName>
    </recommendedName>
</protein>
<comment type="function">
    <text evidence="1">Core component of the RAG complex, a multiprotein complex that mediates the DNA cleavage phase during V(D)J recombination. V(D)J recombination assembles a diverse repertoire of immunoglobulin and T-cell receptor genes in developing B and T lymphocytes through rearrangement of different V (variable), in some cases D (diversity), and J (joining) gene segments. DNA cleavage by the RAG complex occurs in 2 steps: a first nick is introduced in the top strand immediately upstream of the heptamer, generating a 3'-hydroxyl group that can attack the phosphodiester bond on the opposite strand in a direct transesterification reaction, thereby creating 4 DNA ends: 2 hairpin coding ends and 2 blunt, 5'-phosphorylated ends. In the RAG complex, rag2 is not the catalytic component but is required for all known catalytic activities mediated by RAG1. It probably acts as a sensor of chromatin state that recruits the RAG complex to H3K4me3 (By similarity).</text>
</comment>
<comment type="subunit">
    <text evidence="1">Component of the RAG complex composed of core components rag1 and rag2.</text>
</comment>
<comment type="subcellular location">
    <subcellularLocation>
        <location evidence="1">Nucleus</location>
    </subcellularLocation>
</comment>
<comment type="developmental stage">
    <text>First detected in the thymus during day 4 of development. Expression then increases in the thymus for at least three weeks.</text>
</comment>
<comment type="domain">
    <text evidence="1">The atypical PHD-type zinc finger recognizes and binds histone H3 trimethylated on 'Lys-4' (H3K4me3). The atypical PHD-type zinc finger also binds various phosphoinositides (By similarity).</text>
</comment>
<comment type="similarity">
    <text evidence="3">Belongs to the RAG2 family.</text>
</comment>
<name>RAG2_ONCMY</name>